<evidence type="ECO:0000256" key="1">
    <source>
        <dbReference type="SAM" id="MobiDB-lite"/>
    </source>
</evidence>
<evidence type="ECO:0000269" key="2">
    <source>
    </source>
</evidence>
<organismHost>
    <name type="scientific">Acanthamoeba polyphaga</name>
    <name type="common">Amoeba</name>
    <dbReference type="NCBI Taxonomy" id="5757"/>
</organismHost>
<keyword id="KW-1185">Reference proteome</keyword>
<keyword id="KW-0946">Virion</keyword>
<gene>
    <name type="ordered locus">MIMI_R345</name>
</gene>
<protein>
    <recommendedName>
        <fullName>Uncharacterized protein R345</fullName>
    </recommendedName>
</protein>
<organism>
    <name type="scientific">Acanthamoeba polyphaga mimivirus</name>
    <name type="common">APMV</name>
    <dbReference type="NCBI Taxonomy" id="212035"/>
    <lineage>
        <taxon>Viruses</taxon>
        <taxon>Varidnaviria</taxon>
        <taxon>Bamfordvirae</taxon>
        <taxon>Nucleocytoviricota</taxon>
        <taxon>Megaviricetes</taxon>
        <taxon>Imitervirales</taxon>
        <taxon>Mimiviridae</taxon>
        <taxon>Megamimivirinae</taxon>
        <taxon>Mimivirus</taxon>
        <taxon>Mimivirus bradfordmassiliense</taxon>
    </lineage>
</organism>
<name>YR345_MIMIV</name>
<reference key="1">
    <citation type="journal article" date="2004" name="Science">
        <title>The 1.2-megabase genome sequence of Mimivirus.</title>
        <authorList>
            <person name="Raoult D."/>
            <person name="Audic S."/>
            <person name="Robert C."/>
            <person name="Abergel C."/>
            <person name="Renesto P."/>
            <person name="Ogata H."/>
            <person name="La Scola B."/>
            <person name="Susan M."/>
            <person name="Claverie J.-M."/>
        </authorList>
    </citation>
    <scope>NUCLEOTIDE SEQUENCE [LARGE SCALE GENOMIC DNA]</scope>
    <source>
        <strain>Rowbotham-Bradford</strain>
    </source>
</reference>
<reference key="2">
    <citation type="journal article" date="2006" name="J. Virol.">
        <title>Mimivirus giant particles incorporate a large fraction of anonymous and unique gene products.</title>
        <authorList>
            <person name="Renesto P."/>
            <person name="Abergel C."/>
            <person name="Decloquement P."/>
            <person name="Moinier D."/>
            <person name="Azza S."/>
            <person name="Ogata H."/>
            <person name="Fourquet P."/>
            <person name="Gorvel J.-P."/>
            <person name="Claverie J.-M."/>
            <person name="Raoult D."/>
        </authorList>
    </citation>
    <scope>IDENTIFICATION BY MASS SPECTROMETRY [LARGE SCALE ANALYSIS]</scope>
    <scope>SUBCELLULAR LOCATION</scope>
</reference>
<sequence length="984" mass="107451">MLSNVGHSIQKMINNIPVAITANETSTAAVTSGGNVYQTGLIGGKIHYSFNEVITNENIVGKVIDVKATEDRLYLLNNSGSVFEYAYNAGSCSPVVREVYSPAACGGDKAVQIEAGRAHILIKTEAGKIWGAGSNAQYQLVPQGQVRYDTAVEIIVTDTNLHDNECPGSFTGVYNELECPVIPNCEKDKCDISCVKENLCDVHLGYINVSHLALNPPCETGTLSVPVYGDINYVGFLCVDNKGCATGSVTYTINHLYIKCGCLLGKFTHKDKCGCHVRELNLSSTCQVNIFQANPCPSANTDLCALTGSAPITGTTQISGKCGSCVIANVDIPIDFPLPSVSFEATCNTIVLEYNDCKTSITVLCDGTLCDYCECATTLDLDFDVPLKCEAPKPIKPQIELPQPCWAGIYAGYDISVLVDNCNRIYVYGSLHNIRSNKDLLKRSCLEELLKGTNASISFPADQLNCANHTARNDNCKCPKCRDKAFKTDLNKFGIHLSFPNSEDECSQKNMSVCDFLQNLKNCNDAQGCEPTCEPCDGYIYLNVAGDCGCPCGAPASAPIGSITLFNKKSICKLVSQNCPDISEVAIDVSTIVEFDLNKYCIDTRDIALDKVVKLQFCNDGPNVNVYIDIDKPGGIKFTSNGKKCNVEFTVSASTQNHQYILNFGSILDPVELTNLKYALSLDCYYPCPKYKNPFDTKITNTYIRGGDHIKFVVSNPKNIRQAVTADIPTVFRLNRRVIDVGVGYNNLTVLVGGLACPNEIYVIGSNCHGELGLGTNETIVSWRQLNRCIFDCQVNRVFSGRYVTFYITQSNNVYAAGQWKCFINSTTPQIVKSICPAWRISDMAITLNQIILLGADGCIFGLGDNHLGELGLCHTDCVTKPTPISFFYKLNNSAIKQFNDSLAHPMERNNRKCNRPFNPCEFGNFGGPCAPGPCGPFGPFGPSGPGPNQGPGDDYNNFKSTKYPRNGYNKYQPNNRIHSRNRY</sequence>
<comment type="subcellular location">
    <subcellularLocation>
        <location evidence="2">Virion</location>
    </subcellularLocation>
</comment>
<proteinExistence type="evidence at protein level"/>
<dbReference type="EMBL" id="AY653733">
    <property type="protein sequence ID" value="AAV50614.1"/>
    <property type="molecule type" value="Genomic_DNA"/>
</dbReference>
<dbReference type="SMR" id="Q5UQT5"/>
<dbReference type="KEGG" id="vg:9924963"/>
<dbReference type="OrthoDB" id="259at10239"/>
<dbReference type="Proteomes" id="UP000001134">
    <property type="component" value="Genome"/>
</dbReference>
<dbReference type="GO" id="GO:0044423">
    <property type="term" value="C:virion component"/>
    <property type="evidence" value="ECO:0007669"/>
    <property type="project" value="UniProtKB-KW"/>
</dbReference>
<dbReference type="Gene3D" id="2.130.10.30">
    <property type="entry name" value="Regulator of chromosome condensation 1/beta-lactamase-inhibitor protein II"/>
    <property type="match status" value="2"/>
</dbReference>
<dbReference type="InterPro" id="IPR051553">
    <property type="entry name" value="Ran_GTPase-activating"/>
</dbReference>
<dbReference type="InterPro" id="IPR009091">
    <property type="entry name" value="RCC1/BLIP-II"/>
</dbReference>
<dbReference type="PANTHER" id="PTHR45982">
    <property type="entry name" value="REGULATOR OF CHROMOSOME CONDENSATION"/>
    <property type="match status" value="1"/>
</dbReference>
<dbReference type="PANTHER" id="PTHR45982:SF1">
    <property type="entry name" value="REGULATOR OF CHROMOSOME CONDENSATION"/>
    <property type="match status" value="1"/>
</dbReference>
<dbReference type="SUPFAM" id="SSF50985">
    <property type="entry name" value="RCC1/BLIP-II"/>
    <property type="match status" value="2"/>
</dbReference>
<accession>Q5UQT5</accession>
<feature type="chain" id="PRO_0000250627" description="Uncharacterized protein R345">
    <location>
        <begin position="1"/>
        <end position="984"/>
    </location>
</feature>
<feature type="region of interest" description="Disordered" evidence="1">
    <location>
        <begin position="941"/>
        <end position="984"/>
    </location>
</feature>